<organism>
    <name type="scientific">Tetradesmus obliquus</name>
    <name type="common">Green alga</name>
    <name type="synonym">Acutodesmus obliquus</name>
    <dbReference type="NCBI Taxonomy" id="3088"/>
    <lineage>
        <taxon>Eukaryota</taxon>
        <taxon>Viridiplantae</taxon>
        <taxon>Chlorophyta</taxon>
        <taxon>core chlorophytes</taxon>
        <taxon>Chlorophyceae</taxon>
        <taxon>CS clade</taxon>
        <taxon>Sphaeropleales</taxon>
        <taxon>Scenedesmaceae</taxon>
        <taxon>Tetradesmus</taxon>
    </lineage>
</organism>
<feature type="chain" id="PRO_0000242475" description="Photosystem II reaction center protein Psb30">
    <location>
        <begin position="1"/>
        <end position="33"/>
    </location>
</feature>
<feature type="transmembrane region" description="Helical" evidence="1">
    <location>
        <begin position="5"/>
        <end position="25"/>
    </location>
</feature>
<geneLocation type="chloroplast"/>
<name>PSB30_TETOB</name>
<proteinExistence type="inferred from homology"/>
<gene>
    <name evidence="1" type="primary">psb30</name>
    <name evidence="1" type="synonym">ycf12</name>
</gene>
<reference key="1">
    <citation type="journal article" date="2006" name="BMC Evol. Biol.">
        <title>The complete chloroplast genome sequence of the chlorophycean green alga Scenedesmus obliquus reveals a compact gene organization and a biased distribution of genes on the two DNA strands.</title>
        <authorList>
            <person name="de Cambiaire J.-C."/>
            <person name="Otis C."/>
            <person name="Lemieux C."/>
            <person name="Turmel M."/>
        </authorList>
    </citation>
    <scope>NUCLEOTIDE SEQUENCE [LARGE SCALE GENOMIC DNA]</scope>
    <source>
        <strain>UTEX 393</strain>
    </source>
</reference>
<keyword id="KW-0150">Chloroplast</keyword>
<keyword id="KW-0472">Membrane</keyword>
<keyword id="KW-0602">Photosynthesis</keyword>
<keyword id="KW-0604">Photosystem II</keyword>
<keyword id="KW-0934">Plastid</keyword>
<keyword id="KW-0793">Thylakoid</keyword>
<keyword id="KW-0812">Transmembrane</keyword>
<keyword id="KW-1133">Transmembrane helix</keyword>
<evidence type="ECO:0000255" key="1">
    <source>
        <dbReference type="HAMAP-Rule" id="MF_01329"/>
    </source>
</evidence>
<comment type="function">
    <text evidence="1">A core subunit of photosystem II (PSII), probably helps stabilize the reaction center.</text>
</comment>
<comment type="subunit">
    <text evidence="1">PSII is composed of 1 copy each of membrane proteins PsbA, PsbB, PsbC, PsbD, PsbE, PsbF, PsbH, PsbI, PsbJ, PsbK, PsbL, PsbM, PsbT, PsbX, PsbY, PsbZ, Psb30/Ycf12, peripheral proteins of the oxygen-evolving complex and a large number of cofactors. It forms dimeric complexes.</text>
</comment>
<comment type="subcellular location">
    <subcellularLocation>
        <location evidence="1">Plastid</location>
        <location evidence="1">Chloroplast thylakoid membrane</location>
        <topology evidence="1">Single-pass membrane protein</topology>
    </subcellularLocation>
</comment>
<comment type="similarity">
    <text evidence="1">Belongs to the Psb30/Ycf12 family.</text>
</comment>
<sequence>MNLEIVFQLTSLVLILAAGPLVVVLLSARGGNL</sequence>
<protein>
    <recommendedName>
        <fullName evidence="1">Photosystem II reaction center protein Psb30</fullName>
    </recommendedName>
    <alternativeName>
        <fullName evidence="1">Photosystem II reaction center protein Ycf12</fullName>
    </alternativeName>
</protein>
<accession>Q1KVW3</accession>
<dbReference type="EMBL" id="DQ396875">
    <property type="protein sequence ID" value="ABD48244.1"/>
    <property type="molecule type" value="Genomic_DNA"/>
</dbReference>
<dbReference type="RefSeq" id="YP_635961.1">
    <property type="nucleotide sequence ID" value="NC_008101.1"/>
</dbReference>
<dbReference type="SMR" id="Q1KVW3"/>
<dbReference type="GeneID" id="4099743"/>
<dbReference type="GO" id="GO:0009535">
    <property type="term" value="C:chloroplast thylakoid membrane"/>
    <property type="evidence" value="ECO:0007669"/>
    <property type="project" value="UniProtKB-SubCell"/>
</dbReference>
<dbReference type="GO" id="GO:0009523">
    <property type="term" value="C:photosystem II"/>
    <property type="evidence" value="ECO:0007669"/>
    <property type="project" value="UniProtKB-KW"/>
</dbReference>
<dbReference type="GO" id="GO:0015979">
    <property type="term" value="P:photosynthesis"/>
    <property type="evidence" value="ECO:0007669"/>
    <property type="project" value="UniProtKB-KW"/>
</dbReference>
<dbReference type="HAMAP" id="MF_01329">
    <property type="entry name" value="PSII_Psb30_Ycf12"/>
    <property type="match status" value="1"/>
</dbReference>
<dbReference type="InterPro" id="IPR010284">
    <property type="entry name" value="PSII_Ycf12_core-subunit"/>
</dbReference>
<dbReference type="NCBIfam" id="NF010239">
    <property type="entry name" value="PRK13686.1"/>
    <property type="match status" value="1"/>
</dbReference>
<dbReference type="Pfam" id="PF05969">
    <property type="entry name" value="PSII_Ycf12"/>
    <property type="match status" value="1"/>
</dbReference>